<accession>P98150</accession>
<name>NFKB2_CHICK</name>
<organism>
    <name type="scientific">Gallus gallus</name>
    <name type="common">Chicken</name>
    <dbReference type="NCBI Taxonomy" id="9031"/>
    <lineage>
        <taxon>Eukaryota</taxon>
        <taxon>Metazoa</taxon>
        <taxon>Chordata</taxon>
        <taxon>Craniata</taxon>
        <taxon>Vertebrata</taxon>
        <taxon>Euteleostomi</taxon>
        <taxon>Archelosauria</taxon>
        <taxon>Archosauria</taxon>
        <taxon>Dinosauria</taxon>
        <taxon>Saurischia</taxon>
        <taxon>Theropoda</taxon>
        <taxon>Coelurosauria</taxon>
        <taxon>Aves</taxon>
        <taxon>Neognathae</taxon>
        <taxon>Galloanserae</taxon>
        <taxon>Galliformes</taxon>
        <taxon>Phasianidae</taxon>
        <taxon>Phasianinae</taxon>
        <taxon>Gallus</taxon>
    </lineage>
</organism>
<feature type="chain" id="PRO_0000030325" description="Nuclear factor NF-kappa-B p100 subunit">
    <location>
        <begin position="1"/>
        <end position="906"/>
    </location>
</feature>
<feature type="chain" id="PRO_0000030326" description="Nuclear factor NF-kappa-B p52 subunit" evidence="1">
    <location>
        <begin position="1"/>
        <end position="439"/>
    </location>
</feature>
<feature type="domain" description="RHD" evidence="3">
    <location>
        <begin position="34"/>
        <end position="223"/>
    </location>
</feature>
<feature type="repeat" description="ANK 1">
    <location>
        <begin position="472"/>
        <end position="501"/>
    </location>
</feature>
<feature type="repeat" description="ANK 2">
    <location>
        <begin position="511"/>
        <end position="540"/>
    </location>
</feature>
<feature type="repeat" description="ANK 3">
    <location>
        <begin position="544"/>
        <end position="573"/>
    </location>
</feature>
<feature type="repeat" description="ANK 4">
    <location>
        <begin position="582"/>
        <end position="611"/>
    </location>
</feature>
<feature type="repeat" description="ANK 5">
    <location>
        <begin position="616"/>
        <end position="646"/>
    </location>
</feature>
<feature type="repeat" description="ANK 6">
    <location>
        <begin position="650"/>
        <end position="679"/>
    </location>
</feature>
<feature type="domain" description="Death">
    <location>
        <begin position="771"/>
        <end position="857"/>
    </location>
</feature>
<feature type="region of interest" description="GRR">
    <location>
        <begin position="345"/>
        <end position="374"/>
    </location>
</feature>
<feature type="region of interest" description="Disordered" evidence="4">
    <location>
        <begin position="677"/>
        <end position="734"/>
    </location>
</feature>
<feature type="region of interest" description="Disordered" evidence="4">
    <location>
        <begin position="857"/>
        <end position="906"/>
    </location>
</feature>
<feature type="short sequence motif" description="Nuclear localization signal" evidence="2">
    <location>
        <begin position="336"/>
        <end position="340"/>
    </location>
</feature>
<feature type="compositionally biased region" description="Low complexity" evidence="4">
    <location>
        <begin position="684"/>
        <end position="695"/>
    </location>
</feature>
<feature type="compositionally biased region" description="Acidic residues" evidence="4">
    <location>
        <begin position="697"/>
        <end position="708"/>
    </location>
</feature>
<feature type="site" description="Cleavage (when cotranslationally processed)" evidence="1">
    <location>
        <begin position="439"/>
        <end position="440"/>
    </location>
</feature>
<feature type="sequence conflict" description="In Ref. 2; BAA03868." evidence="6" ref="2">
    <original>V</original>
    <variation>G</variation>
    <location>
        <position position="55"/>
    </location>
</feature>
<feature type="sequence conflict" description="In Ref. 2; BAA03868." evidence="6" ref="2">
    <original>S</original>
    <variation>F</variation>
    <location>
        <position position="272"/>
    </location>
</feature>
<feature type="sequence conflict" description="In Ref. 2; BAA03868." evidence="6" ref="2">
    <original>N</original>
    <variation>K</variation>
    <location>
        <position position="337"/>
    </location>
</feature>
<feature type="sequence conflict" description="In Ref. 2; BAA03868." evidence="6" ref="2">
    <original>C</original>
    <variation>G</variation>
    <location>
        <position position="395"/>
    </location>
</feature>
<feature type="sequence conflict" description="In Ref. 2; BAA03868." evidence="6" ref="2">
    <original>R</original>
    <variation>SG</variation>
    <location>
        <position position="409"/>
    </location>
</feature>
<feature type="sequence conflict" description="In Ref. 2; BAA03868." evidence="6" ref="2">
    <original>R</original>
    <variation>A</variation>
    <location>
        <position position="430"/>
    </location>
</feature>
<feature type="sequence conflict" description="In Ref. 2; BAA03868." evidence="6" ref="2">
    <original>E</original>
    <variation>Q</variation>
    <location>
        <position position="533"/>
    </location>
</feature>
<feature type="sequence conflict" description="In Ref. 2; BAA03868." evidence="6" ref="2">
    <original>A</original>
    <variation>G</variation>
    <location>
        <position position="569"/>
    </location>
</feature>
<feature type="sequence conflict" description="In Ref. 2; BAA03868." evidence="6" ref="2">
    <original>T</original>
    <variation>A</variation>
    <location>
        <position position="653"/>
    </location>
</feature>
<feature type="sequence conflict" description="In Ref. 2; BAA03868." evidence="6" ref="2">
    <original>VRVP</original>
    <variation>SEA</variation>
    <location>
        <begin position="690"/>
        <end position="693"/>
    </location>
</feature>
<feature type="sequence conflict" description="In Ref. 2; BAA03868." evidence="6" ref="2">
    <original>L</original>
    <variation>RC</variation>
    <location>
        <position position="736"/>
    </location>
</feature>
<feature type="sequence conflict" description="In Ref. 2; BAA03868." evidence="6" ref="2">
    <original>SPPILSCPPPPSRNHL</original>
    <variation>RPDTELPTTPRAGNV</variation>
    <location>
        <begin position="759"/>
        <end position="774"/>
    </location>
</feature>
<feature type="sequence conflict" description="In Ref. 2; BAA03868." evidence="6" ref="2">
    <original>T</original>
    <variation>S</variation>
    <location>
        <position position="779"/>
    </location>
</feature>
<feature type="sequence conflict" description="In Ref. 2; BAA03868." evidence="6" ref="2">
    <original>Y</original>
    <variation>D</variation>
    <location>
        <position position="792"/>
    </location>
</feature>
<feature type="sequence conflict" description="In Ref. 2; BAA03868." evidence="6" ref="2">
    <original>T</original>
    <variation>D</variation>
    <location>
        <position position="816"/>
    </location>
</feature>
<feature type="sequence conflict" description="In Ref. 2; BAA03868." evidence="6" ref="2">
    <original>ASA</original>
    <variation>SVSL</variation>
    <location>
        <begin position="821"/>
        <end position="823"/>
    </location>
</feature>
<feature type="sequence conflict" description="In Ref. 2; BAA03868." evidence="6" ref="2">
    <original>P</original>
    <variation>A</variation>
    <location>
        <position position="830"/>
    </location>
</feature>
<feature type="sequence conflict" description="In Ref. 2; BAA03868." evidence="6" ref="2">
    <original>R</original>
    <variation>A</variation>
    <location>
        <position position="885"/>
    </location>
</feature>
<comment type="function">
    <text evidence="1">NF-kappa-B is a pleiotropic transcription factor present in almost all cell types and is the endpoint of a series of signal transduction events that are initiated by a vast array of stimuli related to many biological processes such as inflammation, immunity, differentiation, cell growth, tumorigenesis and apoptosis. NF-kappa-B is a homo- or heterodimeric complex formed by the Rel-like domain-containing proteins RELA/p65, RELB, NFKB1/p105, NFKB1/p50, REL and NFKB2/p52. The dimers bind at kappa-B sites in the DNA of their target genes and the individual dimers have distinct preferences for different kappa-B sites that they can bind with distinguishable affinity and specificity. Different dimer combinations act as transcriptional activators or repressors, respectively. NF-kappa-B is controlled by various mechanisms of post-translational modification and subcellular compartmentalization as well as by interactions with other cofactors or corepressors. NF-kappa-B complexes are held in the cytoplasm in an inactive state complexed with members of the NF-kappa-B inhibitor (I-kappa-B) family. In a conventional activation pathway, I-kappa-B is phosphorylated by I-kappa-B kinases (IKKs) in response to different activators, subsequently degraded thus liberating the active NF-kappa-B complex which translocates to the nucleus. In a non-canonical activation pathway, the MAP3K14-activated CHUK/IKKA homodimer phosphorylates NFKB2/p100 associated with RelB, inducing its proteolytic processing to NFKB2/p52 and the formation of NF-kappa-B RelB-p52 complexes. The NF-kappa-B heterodimeric RelB-p52 complex is a transcriptional activator. NFKB2 appears to have dual functions such as cytoplasmic retention of attached NF-kappa-B proteins by p100 and generation of p52 by a cotranslational processing. The proteasome-mediated process ensures the production of both p52 and p100 and preserves their independent function. p52 binds to the kappa-B consensus sequence 5'-GGRNNYYCC-3', located in the enhancer region of genes involved in immune response and acute phase reactions. In concert with RELB, may play a role in the regulation of the circadian clock (By similarity).</text>
</comment>
<comment type="subunit">
    <text evidence="5">Component of the NF-kappa-B RelB-p52 complex.</text>
</comment>
<comment type="subcellular location">
    <subcellularLocation>
        <location evidence="1">Nucleus</location>
    </subcellularLocation>
    <subcellularLocation>
        <location evidence="1">Cytoplasm</location>
    </subcellularLocation>
    <text evidence="1">Nuclear, but also found in the cytoplasm in an inactive form complexed to an inhibitor (I-kappa-B).</text>
</comment>
<comment type="domain">
    <text evidence="1">The C-terminus of p100 might be involved in cytoplasmic retention, inhibition of DNA-binding by p52 homodimers, and/or transcription activation.</text>
</comment>
<comment type="domain">
    <text evidence="1">The glycine-rich region (GRR) appears to be a critical element in the generation of p52.</text>
</comment>
<comment type="PTM">
    <text evidence="1">While translation occurs, the particular unfolded structure after the GRR repeat promotes the generation of p52 making it an acceptable substrate for the proteasome. This process is known as cotranslational processing. The processed form is active and the unprocessed form acts as an inhibitor (I kappa B-like), being able to form cytosolic complexes with NF-kappa B, trapping it in the cytoplasm. Complete folding of the region downstream of the GRR repeat precludes processing (By similarity).</text>
</comment>
<comment type="PTM">
    <text evidence="1">Constitutive processing is tightly suppressed by its C-terminal processing inhibitory domain, named PID, which contains the death domain.</text>
</comment>
<comment type="miscellaneous">
    <text>NF-kappa-B p100 is one of the high-molecular-weight proteins complexed with the v-rel oncoprotein in transformed chicken spleen cells.</text>
</comment>
<evidence type="ECO:0000250" key="1"/>
<evidence type="ECO:0000255" key="2"/>
<evidence type="ECO:0000255" key="3">
    <source>
        <dbReference type="PROSITE-ProRule" id="PRU00265"/>
    </source>
</evidence>
<evidence type="ECO:0000256" key="4">
    <source>
        <dbReference type="SAM" id="MobiDB-lite"/>
    </source>
</evidence>
<evidence type="ECO:0000269" key="5">
    <source>
    </source>
</evidence>
<evidence type="ECO:0000305" key="6"/>
<gene>
    <name type="primary">NFKB2</name>
</gene>
<keyword id="KW-0010">Activator</keyword>
<keyword id="KW-0040">ANK repeat</keyword>
<keyword id="KW-0090">Biological rhythms</keyword>
<keyword id="KW-0963">Cytoplasm</keyword>
<keyword id="KW-0238">DNA-binding</keyword>
<keyword id="KW-0539">Nucleus</keyword>
<keyword id="KW-1185">Reference proteome</keyword>
<keyword id="KW-0677">Repeat</keyword>
<keyword id="KW-0804">Transcription</keyword>
<keyword id="KW-0805">Transcription regulation</keyword>
<reference key="1">
    <citation type="journal article" date="1993" name="J. Virol.">
        <title>NF-kappa B p100 is one of the high-molecular-weight proteins complexed with the v-Rel oncoprotein in transformed chicken spleen cells.</title>
        <authorList>
            <person name="Sif S."/>
            <person name="Gilmore T.D."/>
        </authorList>
    </citation>
    <scope>NUCLEOTIDE SEQUENCE [MRNA]</scope>
    <source>
        <tissue>Fibroblast</tissue>
    </source>
</reference>
<reference key="2">
    <citation type="journal article" date="1994" name="Gene">
        <title>Isolation of a cDNA encoding the chicken p50B/p97 (Lyt-10) transcription factor.</title>
        <authorList>
            <person name="Ikeda T."/>
            <person name="Hirota Y."/>
            <person name="Onodera T."/>
        </authorList>
    </citation>
    <scope>NUCLEOTIDE SEQUENCE [MRNA]</scope>
    <source>
        <tissue>Spleen</tissue>
    </source>
</reference>
<reference key="3">
    <citation type="journal article" date="2001" name="Mol. Cell Biol. Res. Commun.">
        <title>The chicken RelB transcription factor has transactivation sequences and a tissue-specific expression pattern that are distinct from mammalian RelB.</title>
        <authorList>
            <person name="Piffat K.A."/>
            <person name="Hrdlickova R."/>
            <person name="Nehyba J."/>
            <person name="Ikeda T."/>
            <person name="Liss A."/>
            <person name="Huang S."/>
            <person name="Sif S."/>
            <person name="Gilmore T.D."/>
            <person name="Bose H.R. Jr."/>
        </authorList>
    </citation>
    <scope>IDENTIFICATION IN THE NF-KAPPA-B RELB-P52 COMPLEX</scope>
</reference>
<sequence length="906" mass="99667">MDEHFQPCLDGIDYDDFSFGSHMVEQKEPLMETAVGPYLVIIEQPKQRGFRFRYVCEGPSHGGLPGASSEKGHKTYPTVKICNYEGMARIEVDLVTHSDPPRVHAHSLVGKQCNEAGNCVAIVGPKDMTAQFSNLGVLHVTKKNMMEIMKEKLKKQKTRNTNGLLTEAELREIELEAKELKKVMDLSIVRLRFTAYLRDSSGNFTLALQPVISDPIHDSKSPGASNLKISRMDKTAGSVRGGDEVYLLCDKVQKDDIEVRFYEDDENGWQASGDFSPTDVHKQYAIVFRTPPYHKPKIDRPVTVFLQLKRKRGGDVSDSKQFTYYPVVEDKEEVERNRKKVLPQFPQHFGGGSHMGGAGGAGGFGAGGGGNLSFPYSSGLGYNNLYSSSPHPVGCGYQGGVQMKAASERDGDDRQAPTESTYCRELQRHRHLCHLWLLARRNAHALLDYSVTADPRMLLAVQRHLAASQDENGDTPLHLAIIHEQTAVIKQLIEVVVSIPSQQIINITNNLQQTPLHLAVITKQPQVVQLLLEAHANPTLLDRYGNSLLHLALQAADEEMLRMLLAHLASATPYLLHLPNFQGLLPVHLAVKAKSPACLDLLVRKGADVNGVERQGGRTPLHLAVEMENLNMATHLVKKLGANVNSRTFAGNTPLHLAAGLGSPTLTKLLLKAGADVQRENDEPVSPSSVRVPSSDTDGDPEEQEQEQAMELGEPALSPHPTPEEEQEEAGPRQRLHTALDLTRSQKVRDILLQASQPSPPILSCPPPPSRNHLLSLDTDALQGLEQLLNQYGSGSDWMELAKRLGLCSLVETYKTTPSPASALRSYELPGGSLGGLLEALDSMGLRGAVRMLRKPEPLEKLQSTEVKEDSAYGSESVEEEQAARLKPRPVPEGELPHSQQQQQVH</sequence>
<proteinExistence type="evidence at protein level"/>
<dbReference type="EMBL" id="U00111">
    <property type="protein sequence ID" value="AAA03717.1"/>
    <property type="molecule type" value="mRNA"/>
</dbReference>
<dbReference type="EMBL" id="D16367">
    <property type="protein sequence ID" value="BAA03868.1"/>
    <property type="molecule type" value="mRNA"/>
</dbReference>
<dbReference type="PIR" id="I50404">
    <property type="entry name" value="I50404"/>
</dbReference>
<dbReference type="RefSeq" id="NP_989744.1">
    <property type="nucleotide sequence ID" value="NM_204413.1"/>
</dbReference>
<dbReference type="SMR" id="P98150"/>
<dbReference type="FunCoup" id="P98150">
    <property type="interactions" value="628"/>
</dbReference>
<dbReference type="STRING" id="9031.ENSGALP00000042025"/>
<dbReference type="GlyGen" id="P98150">
    <property type="glycosylation" value="1 site"/>
</dbReference>
<dbReference type="PaxDb" id="9031-ENSGALP00000042025"/>
<dbReference type="GeneID" id="386574"/>
<dbReference type="KEGG" id="gga:386574"/>
<dbReference type="CTD" id="4791"/>
<dbReference type="VEuPathDB" id="HostDB:geneid_386574"/>
<dbReference type="eggNOG" id="KOG0504">
    <property type="taxonomic scope" value="Eukaryota"/>
</dbReference>
<dbReference type="InParanoid" id="P98150"/>
<dbReference type="OrthoDB" id="10254686at2759"/>
<dbReference type="PhylomeDB" id="P98150"/>
<dbReference type="PRO" id="PR:P98150"/>
<dbReference type="Proteomes" id="UP000000539">
    <property type="component" value="Unassembled WGS sequence"/>
</dbReference>
<dbReference type="GO" id="GO:0005737">
    <property type="term" value="C:cytoplasm"/>
    <property type="evidence" value="ECO:0007669"/>
    <property type="project" value="UniProtKB-SubCell"/>
</dbReference>
<dbReference type="GO" id="GO:0005634">
    <property type="term" value="C:nucleus"/>
    <property type="evidence" value="ECO:0007669"/>
    <property type="project" value="UniProtKB-SubCell"/>
</dbReference>
<dbReference type="GO" id="GO:0000981">
    <property type="term" value="F:DNA-binding transcription factor activity, RNA polymerase II-specific"/>
    <property type="evidence" value="ECO:0000318"/>
    <property type="project" value="GO_Central"/>
</dbReference>
<dbReference type="GO" id="GO:0000978">
    <property type="term" value="F:RNA polymerase II cis-regulatory region sequence-specific DNA binding"/>
    <property type="evidence" value="ECO:0000318"/>
    <property type="project" value="GO_Central"/>
</dbReference>
<dbReference type="GO" id="GO:0048511">
    <property type="term" value="P:rhythmic process"/>
    <property type="evidence" value="ECO:0007669"/>
    <property type="project" value="UniProtKB-KW"/>
</dbReference>
<dbReference type="GO" id="GO:0007165">
    <property type="term" value="P:signal transduction"/>
    <property type="evidence" value="ECO:0007669"/>
    <property type="project" value="InterPro"/>
</dbReference>
<dbReference type="CDD" id="cd01177">
    <property type="entry name" value="IPT_NFkappaB"/>
    <property type="match status" value="1"/>
</dbReference>
<dbReference type="CDD" id="cd07934">
    <property type="entry name" value="RHD-n_NFkB2"/>
    <property type="match status" value="1"/>
</dbReference>
<dbReference type="FunFam" id="2.60.40.10:FF:000046">
    <property type="entry name" value="Nuclear factor NF-kappa-B p105 subunit"/>
    <property type="match status" value="1"/>
</dbReference>
<dbReference type="FunFam" id="2.60.40.340:FF:000004">
    <property type="entry name" value="Nuclear factor NF-kappa-B p105 subunit isoform 1"/>
    <property type="match status" value="1"/>
</dbReference>
<dbReference type="Gene3D" id="1.25.40.20">
    <property type="entry name" value="Ankyrin repeat-containing domain"/>
    <property type="match status" value="1"/>
</dbReference>
<dbReference type="Gene3D" id="1.10.533.10">
    <property type="entry name" value="Death Domain, Fas"/>
    <property type="match status" value="1"/>
</dbReference>
<dbReference type="Gene3D" id="2.60.40.10">
    <property type="entry name" value="Immunoglobulins"/>
    <property type="match status" value="1"/>
</dbReference>
<dbReference type="Gene3D" id="2.60.40.340">
    <property type="entry name" value="Rel homology domain (RHD), DNA-binding domain"/>
    <property type="match status" value="1"/>
</dbReference>
<dbReference type="InterPro" id="IPR002110">
    <property type="entry name" value="Ankyrin_rpt"/>
</dbReference>
<dbReference type="InterPro" id="IPR036770">
    <property type="entry name" value="Ankyrin_rpt-contain_sf"/>
</dbReference>
<dbReference type="InterPro" id="IPR011029">
    <property type="entry name" value="DEATH-like_dom_sf"/>
</dbReference>
<dbReference type="InterPro" id="IPR000488">
    <property type="entry name" value="Death_dom"/>
</dbReference>
<dbReference type="InterPro" id="IPR013783">
    <property type="entry name" value="Ig-like_fold"/>
</dbReference>
<dbReference type="InterPro" id="IPR014756">
    <property type="entry name" value="Ig_E-set"/>
</dbReference>
<dbReference type="InterPro" id="IPR002909">
    <property type="entry name" value="IPT_dom"/>
</dbReference>
<dbReference type="InterPro" id="IPR033926">
    <property type="entry name" value="IPT_NFkappaB"/>
</dbReference>
<dbReference type="InterPro" id="IPR000451">
    <property type="entry name" value="NFkB/Dor"/>
</dbReference>
<dbReference type="InterPro" id="IPR030497">
    <property type="entry name" value="NFkB_p100_RHD_N"/>
</dbReference>
<dbReference type="InterPro" id="IPR008967">
    <property type="entry name" value="p53-like_TF_DNA-bd_sf"/>
</dbReference>
<dbReference type="InterPro" id="IPR030492">
    <property type="entry name" value="RHD_CS"/>
</dbReference>
<dbReference type="InterPro" id="IPR032397">
    <property type="entry name" value="RHD_dimer"/>
</dbReference>
<dbReference type="InterPro" id="IPR011539">
    <property type="entry name" value="RHD_DNA_bind_dom"/>
</dbReference>
<dbReference type="InterPro" id="IPR037059">
    <property type="entry name" value="RHD_DNA_bind_dom_sf"/>
</dbReference>
<dbReference type="PANTHER" id="PTHR24169:SF21">
    <property type="entry name" value="NUCLEAR FACTOR NF-KAPPA-B P100 SUBUNIT"/>
    <property type="match status" value="1"/>
</dbReference>
<dbReference type="PANTHER" id="PTHR24169">
    <property type="entry name" value="NUCLEAR FACTOR NF-KAPPA-B PROTEIN"/>
    <property type="match status" value="1"/>
</dbReference>
<dbReference type="Pfam" id="PF12796">
    <property type="entry name" value="Ank_2"/>
    <property type="match status" value="2"/>
</dbReference>
<dbReference type="Pfam" id="PF00531">
    <property type="entry name" value="Death"/>
    <property type="match status" value="1"/>
</dbReference>
<dbReference type="Pfam" id="PF16179">
    <property type="entry name" value="RHD_dimer"/>
    <property type="match status" value="1"/>
</dbReference>
<dbReference type="Pfam" id="PF00554">
    <property type="entry name" value="RHD_DNA_bind"/>
    <property type="match status" value="1"/>
</dbReference>
<dbReference type="PRINTS" id="PR00057">
    <property type="entry name" value="NFKBTNSCPFCT"/>
</dbReference>
<dbReference type="SMART" id="SM00248">
    <property type="entry name" value="ANK"/>
    <property type="match status" value="6"/>
</dbReference>
<dbReference type="SMART" id="SM00005">
    <property type="entry name" value="DEATH"/>
    <property type="match status" value="1"/>
</dbReference>
<dbReference type="SMART" id="SM00429">
    <property type="entry name" value="IPT"/>
    <property type="match status" value="1"/>
</dbReference>
<dbReference type="SUPFAM" id="SSF48403">
    <property type="entry name" value="Ankyrin repeat"/>
    <property type="match status" value="1"/>
</dbReference>
<dbReference type="SUPFAM" id="SSF47986">
    <property type="entry name" value="DEATH domain"/>
    <property type="match status" value="1"/>
</dbReference>
<dbReference type="SUPFAM" id="SSF81296">
    <property type="entry name" value="E set domains"/>
    <property type="match status" value="1"/>
</dbReference>
<dbReference type="SUPFAM" id="SSF49417">
    <property type="entry name" value="p53-like transcription factors"/>
    <property type="match status" value="1"/>
</dbReference>
<dbReference type="PROSITE" id="PS50297">
    <property type="entry name" value="ANK_REP_REGION"/>
    <property type="match status" value="1"/>
</dbReference>
<dbReference type="PROSITE" id="PS50088">
    <property type="entry name" value="ANK_REPEAT"/>
    <property type="match status" value="5"/>
</dbReference>
<dbReference type="PROSITE" id="PS01204">
    <property type="entry name" value="REL_1"/>
    <property type="match status" value="1"/>
</dbReference>
<dbReference type="PROSITE" id="PS50254">
    <property type="entry name" value="REL_2"/>
    <property type="match status" value="1"/>
</dbReference>
<protein>
    <recommendedName>
        <fullName>Nuclear factor NF-kappa-B p100 subunit</fullName>
    </recommendedName>
    <alternativeName>
        <fullName>DNA-binding factor KBF2</fullName>
    </alternativeName>
    <alternativeName>
        <fullName>Lyt-10</fullName>
    </alternativeName>
    <alternativeName>
        <fullName>Nuclear factor NF-kappa-B p97 subunit</fullName>
    </alternativeName>
    <alternativeName>
        <fullName>Nuclear factor of kappa light polypeptide gene enhancer in B-cells 2</fullName>
    </alternativeName>
    <component>
        <recommendedName>
            <fullName>Nuclear factor NF-kappa-B p52 subunit</fullName>
        </recommendedName>
        <alternativeName>
            <fullName>Nuclear factor NF-kappa-B p50B subunit</fullName>
        </alternativeName>
    </component>
</protein>